<comment type="function">
    <text evidence="1">Catalyzes the condensation reaction of fatty acid synthesis by the addition to an acyl acceptor of two carbons from malonyl-ACP. Catalyzes the first condensation reaction which initiates fatty acid synthesis and may therefore play a role in governing the total rate of fatty acid production. Possesses both acetoacetyl-ACP synthase and acetyl transacylase activities. Its substrate specificity determines the biosynthesis of branched-chain and/or straight-chain of fatty acids.</text>
</comment>
<comment type="catalytic activity">
    <reaction evidence="1">
        <text>malonyl-[ACP] + acetyl-CoA + H(+) = 3-oxobutanoyl-[ACP] + CO2 + CoA</text>
        <dbReference type="Rhea" id="RHEA:12080"/>
        <dbReference type="Rhea" id="RHEA-COMP:9623"/>
        <dbReference type="Rhea" id="RHEA-COMP:9625"/>
        <dbReference type="ChEBI" id="CHEBI:15378"/>
        <dbReference type="ChEBI" id="CHEBI:16526"/>
        <dbReference type="ChEBI" id="CHEBI:57287"/>
        <dbReference type="ChEBI" id="CHEBI:57288"/>
        <dbReference type="ChEBI" id="CHEBI:78449"/>
        <dbReference type="ChEBI" id="CHEBI:78450"/>
        <dbReference type="EC" id="2.3.1.180"/>
    </reaction>
</comment>
<comment type="pathway">
    <text evidence="1">Lipid metabolism; fatty acid biosynthesis.</text>
</comment>
<comment type="subunit">
    <text evidence="1">Homodimer.</text>
</comment>
<comment type="subcellular location">
    <subcellularLocation>
        <location evidence="1">Cytoplasm</location>
    </subcellularLocation>
</comment>
<comment type="domain">
    <text evidence="1">The last Arg residue of the ACP-binding site is essential for the weak association between ACP/AcpP and FabH.</text>
</comment>
<comment type="similarity">
    <text evidence="1">Belongs to the thiolase-like superfamily. FabH family.</text>
</comment>
<accession>Q5M184</accession>
<keyword id="KW-0012">Acyltransferase</keyword>
<keyword id="KW-0963">Cytoplasm</keyword>
<keyword id="KW-0275">Fatty acid biosynthesis</keyword>
<keyword id="KW-0276">Fatty acid metabolism</keyword>
<keyword id="KW-0444">Lipid biosynthesis</keyword>
<keyword id="KW-0443">Lipid metabolism</keyword>
<keyword id="KW-0511">Multifunctional enzyme</keyword>
<keyword id="KW-0808">Transferase</keyword>
<proteinExistence type="inferred from homology"/>
<protein>
    <recommendedName>
        <fullName evidence="1">Beta-ketoacyl-[acyl-carrier-protein] synthase III</fullName>
        <shortName evidence="1">Beta-ketoacyl-ACP synthase III</shortName>
        <shortName evidence="1">KAS III</shortName>
        <ecNumber evidence="1">2.3.1.180</ecNumber>
    </recommendedName>
    <alternativeName>
        <fullName evidence="1">3-oxoacyl-[acyl-carrier-protein] synthase 3</fullName>
    </alternativeName>
    <alternativeName>
        <fullName evidence="1">3-oxoacyl-[acyl-carrier-protein] synthase III</fullName>
    </alternativeName>
</protein>
<organism>
    <name type="scientific">Streptococcus thermophilus (strain CNRZ 1066)</name>
    <dbReference type="NCBI Taxonomy" id="299768"/>
    <lineage>
        <taxon>Bacteria</taxon>
        <taxon>Bacillati</taxon>
        <taxon>Bacillota</taxon>
        <taxon>Bacilli</taxon>
        <taxon>Lactobacillales</taxon>
        <taxon>Streptococcaceae</taxon>
        <taxon>Streptococcus</taxon>
    </lineage>
</organism>
<evidence type="ECO:0000255" key="1">
    <source>
        <dbReference type="HAMAP-Rule" id="MF_01815"/>
    </source>
</evidence>
<name>FABH_STRT1</name>
<sequence>MAFAKISQVAHYAPAQVVTNDDLSKIMDTSDEWIRSRTGIQERRISLNENTSDLATNVAYQLLEKSGLSPEELDFVLVATISPDNSMPSVAARVQGTIGAVNAFAFDITAACSGFVFALATAEKLIKSGAYKKGLVIGAEVLSKTLDWSDRATAVLFGDGAGGVLLEESEEEHFFGESLNTDGSKGGLESGASAVISPYSDGTEQPNPYMQMDGKAIFDFAVKTVSKSIKALVEEKGEPDYFLLHQANIRILDTMAKKIDVSRDKFLANMMSYGNTSAASIPILLSENVANETLKLGSDQTILLSGFGGGLTWGSLIVKI</sequence>
<gene>
    <name evidence="1" type="primary">fabH</name>
    <name type="ordered locus">str0382</name>
</gene>
<dbReference type="EC" id="2.3.1.180" evidence="1"/>
<dbReference type="EMBL" id="CP000024">
    <property type="protein sequence ID" value="AAV61985.1"/>
    <property type="molecule type" value="Genomic_DNA"/>
</dbReference>
<dbReference type="RefSeq" id="WP_002949773.1">
    <property type="nucleotide sequence ID" value="NC_006449.1"/>
</dbReference>
<dbReference type="SMR" id="Q5M184"/>
<dbReference type="KEGG" id="stc:str0382"/>
<dbReference type="HOGENOM" id="CLU_039592_4_1_9"/>
<dbReference type="UniPathway" id="UPA00094"/>
<dbReference type="GO" id="GO:0005737">
    <property type="term" value="C:cytoplasm"/>
    <property type="evidence" value="ECO:0007669"/>
    <property type="project" value="UniProtKB-SubCell"/>
</dbReference>
<dbReference type="GO" id="GO:0004315">
    <property type="term" value="F:3-oxoacyl-[acyl-carrier-protein] synthase activity"/>
    <property type="evidence" value="ECO:0007669"/>
    <property type="project" value="InterPro"/>
</dbReference>
<dbReference type="GO" id="GO:0033818">
    <property type="term" value="F:beta-ketoacyl-acyl-carrier-protein synthase III activity"/>
    <property type="evidence" value="ECO:0007669"/>
    <property type="project" value="UniProtKB-UniRule"/>
</dbReference>
<dbReference type="GO" id="GO:0006633">
    <property type="term" value="P:fatty acid biosynthetic process"/>
    <property type="evidence" value="ECO:0007669"/>
    <property type="project" value="UniProtKB-UniRule"/>
</dbReference>
<dbReference type="CDD" id="cd00830">
    <property type="entry name" value="KAS_III"/>
    <property type="match status" value="1"/>
</dbReference>
<dbReference type="Gene3D" id="3.40.47.10">
    <property type="match status" value="1"/>
</dbReference>
<dbReference type="HAMAP" id="MF_01815">
    <property type="entry name" value="FabH"/>
    <property type="match status" value="1"/>
</dbReference>
<dbReference type="InterPro" id="IPR013747">
    <property type="entry name" value="ACP_syn_III_C"/>
</dbReference>
<dbReference type="InterPro" id="IPR013751">
    <property type="entry name" value="ACP_syn_III_N"/>
</dbReference>
<dbReference type="InterPro" id="IPR004655">
    <property type="entry name" value="FabH"/>
</dbReference>
<dbReference type="InterPro" id="IPR016039">
    <property type="entry name" value="Thiolase-like"/>
</dbReference>
<dbReference type="NCBIfam" id="TIGR00747">
    <property type="entry name" value="fabH"/>
    <property type="match status" value="1"/>
</dbReference>
<dbReference type="NCBIfam" id="NF006829">
    <property type="entry name" value="PRK09352.1"/>
    <property type="match status" value="1"/>
</dbReference>
<dbReference type="PANTHER" id="PTHR43091">
    <property type="entry name" value="3-OXOACYL-[ACYL-CARRIER-PROTEIN] SYNTHASE"/>
    <property type="match status" value="1"/>
</dbReference>
<dbReference type="PANTHER" id="PTHR43091:SF1">
    <property type="entry name" value="BETA-KETOACYL-[ACYL-CARRIER-PROTEIN] SYNTHASE III, CHLOROPLASTIC"/>
    <property type="match status" value="1"/>
</dbReference>
<dbReference type="Pfam" id="PF08545">
    <property type="entry name" value="ACP_syn_III"/>
    <property type="match status" value="1"/>
</dbReference>
<dbReference type="Pfam" id="PF08541">
    <property type="entry name" value="ACP_syn_III_C"/>
    <property type="match status" value="1"/>
</dbReference>
<dbReference type="SUPFAM" id="SSF53901">
    <property type="entry name" value="Thiolase-like"/>
    <property type="match status" value="1"/>
</dbReference>
<feature type="chain" id="PRO_1000056429" description="Beta-ketoacyl-[acyl-carrier-protein] synthase III">
    <location>
        <begin position="1"/>
        <end position="320"/>
    </location>
</feature>
<feature type="region of interest" description="ACP-binding" evidence="1">
    <location>
        <begin position="246"/>
        <end position="250"/>
    </location>
</feature>
<feature type="active site" evidence="1">
    <location>
        <position position="112"/>
    </location>
</feature>
<feature type="active site" evidence="1">
    <location>
        <position position="245"/>
    </location>
</feature>
<feature type="active site" evidence="1">
    <location>
        <position position="275"/>
    </location>
</feature>
<reference key="1">
    <citation type="journal article" date="2004" name="Nat. Biotechnol.">
        <title>Complete sequence and comparative genome analysis of the dairy bacterium Streptococcus thermophilus.</title>
        <authorList>
            <person name="Bolotin A."/>
            <person name="Quinquis B."/>
            <person name="Renault P."/>
            <person name="Sorokin A."/>
            <person name="Ehrlich S.D."/>
            <person name="Kulakauskas S."/>
            <person name="Lapidus A."/>
            <person name="Goltsman E."/>
            <person name="Mazur M."/>
            <person name="Pusch G.D."/>
            <person name="Fonstein M."/>
            <person name="Overbeek R."/>
            <person name="Kyprides N."/>
            <person name="Purnelle B."/>
            <person name="Prozzi D."/>
            <person name="Ngui K."/>
            <person name="Masuy D."/>
            <person name="Hancy F."/>
            <person name="Burteau S."/>
            <person name="Boutry M."/>
            <person name="Delcour J."/>
            <person name="Goffeau A."/>
            <person name="Hols P."/>
        </authorList>
    </citation>
    <scope>NUCLEOTIDE SEQUENCE [LARGE SCALE GENOMIC DNA]</scope>
    <source>
        <strain>CNRZ 1066</strain>
    </source>
</reference>